<keyword id="KW-0067">ATP-binding</keyword>
<keyword id="KW-0963">Cytoplasm</keyword>
<keyword id="KW-0275">Fatty acid biosynthesis</keyword>
<keyword id="KW-0276">Fatty acid metabolism</keyword>
<keyword id="KW-0444">Lipid biosynthesis</keyword>
<keyword id="KW-0443">Lipid metabolism</keyword>
<keyword id="KW-0479">Metal-binding</keyword>
<keyword id="KW-0547">Nucleotide-binding</keyword>
<keyword id="KW-0808">Transferase</keyword>
<keyword id="KW-0862">Zinc</keyword>
<keyword id="KW-0863">Zinc-finger</keyword>
<dbReference type="EC" id="2.1.3.15" evidence="1"/>
<dbReference type="EMBL" id="CR543861">
    <property type="protein sequence ID" value="CAG67563.1"/>
    <property type="molecule type" value="Genomic_DNA"/>
</dbReference>
<dbReference type="RefSeq" id="WP_004919787.1">
    <property type="nucleotide sequence ID" value="NC_005966.1"/>
</dbReference>
<dbReference type="SMR" id="Q6FEE5"/>
<dbReference type="STRING" id="202950.GCA_001485005_00875"/>
<dbReference type="GeneID" id="45233115"/>
<dbReference type="KEGG" id="aci:ACIAD0643"/>
<dbReference type="eggNOG" id="COG0777">
    <property type="taxonomic scope" value="Bacteria"/>
</dbReference>
<dbReference type="HOGENOM" id="CLU_015486_1_0_6"/>
<dbReference type="OrthoDB" id="9772975at2"/>
<dbReference type="BioCyc" id="ASP62977:ACIAD_RS02935-MONOMER"/>
<dbReference type="UniPathway" id="UPA00655">
    <property type="reaction ID" value="UER00711"/>
</dbReference>
<dbReference type="Proteomes" id="UP000000430">
    <property type="component" value="Chromosome"/>
</dbReference>
<dbReference type="GO" id="GO:0009329">
    <property type="term" value="C:acetate CoA-transferase complex"/>
    <property type="evidence" value="ECO:0007669"/>
    <property type="project" value="TreeGrafter"/>
</dbReference>
<dbReference type="GO" id="GO:0003989">
    <property type="term" value="F:acetyl-CoA carboxylase activity"/>
    <property type="evidence" value="ECO:0007669"/>
    <property type="project" value="InterPro"/>
</dbReference>
<dbReference type="GO" id="GO:0005524">
    <property type="term" value="F:ATP binding"/>
    <property type="evidence" value="ECO:0007669"/>
    <property type="project" value="UniProtKB-KW"/>
</dbReference>
<dbReference type="GO" id="GO:0016743">
    <property type="term" value="F:carboxyl- or carbamoyltransferase activity"/>
    <property type="evidence" value="ECO:0007669"/>
    <property type="project" value="UniProtKB-UniRule"/>
</dbReference>
<dbReference type="GO" id="GO:0008270">
    <property type="term" value="F:zinc ion binding"/>
    <property type="evidence" value="ECO:0007669"/>
    <property type="project" value="UniProtKB-UniRule"/>
</dbReference>
<dbReference type="GO" id="GO:0006633">
    <property type="term" value="P:fatty acid biosynthetic process"/>
    <property type="evidence" value="ECO:0007669"/>
    <property type="project" value="UniProtKB-KW"/>
</dbReference>
<dbReference type="GO" id="GO:2001295">
    <property type="term" value="P:malonyl-CoA biosynthetic process"/>
    <property type="evidence" value="ECO:0007669"/>
    <property type="project" value="UniProtKB-UniRule"/>
</dbReference>
<dbReference type="Gene3D" id="3.90.226.10">
    <property type="entry name" value="2-enoyl-CoA Hydratase, Chain A, domain 1"/>
    <property type="match status" value="1"/>
</dbReference>
<dbReference type="HAMAP" id="MF_01395">
    <property type="entry name" value="AcetylCoA_CT_beta"/>
    <property type="match status" value="1"/>
</dbReference>
<dbReference type="InterPro" id="IPR034733">
    <property type="entry name" value="AcCoA_carboxyl_beta"/>
</dbReference>
<dbReference type="InterPro" id="IPR000438">
    <property type="entry name" value="Acetyl_CoA_COase_Trfase_b_su"/>
</dbReference>
<dbReference type="InterPro" id="IPR029045">
    <property type="entry name" value="ClpP/crotonase-like_dom_sf"/>
</dbReference>
<dbReference type="InterPro" id="IPR011762">
    <property type="entry name" value="COA_CT_N"/>
</dbReference>
<dbReference type="NCBIfam" id="TIGR00515">
    <property type="entry name" value="accD"/>
    <property type="match status" value="1"/>
</dbReference>
<dbReference type="PANTHER" id="PTHR42995">
    <property type="entry name" value="ACETYL-COENZYME A CARBOXYLASE CARBOXYL TRANSFERASE SUBUNIT BETA, CHLOROPLASTIC"/>
    <property type="match status" value="1"/>
</dbReference>
<dbReference type="PANTHER" id="PTHR42995:SF5">
    <property type="entry name" value="ACETYL-COENZYME A CARBOXYLASE CARBOXYL TRANSFERASE SUBUNIT BETA, CHLOROPLASTIC"/>
    <property type="match status" value="1"/>
</dbReference>
<dbReference type="Pfam" id="PF01039">
    <property type="entry name" value="Carboxyl_trans"/>
    <property type="match status" value="1"/>
</dbReference>
<dbReference type="PRINTS" id="PR01070">
    <property type="entry name" value="ACCCTRFRASEB"/>
</dbReference>
<dbReference type="SUPFAM" id="SSF52096">
    <property type="entry name" value="ClpP/crotonase"/>
    <property type="match status" value="1"/>
</dbReference>
<dbReference type="PROSITE" id="PS50980">
    <property type="entry name" value="COA_CT_NTER"/>
    <property type="match status" value="1"/>
</dbReference>
<protein>
    <recommendedName>
        <fullName evidence="1">Acetyl-coenzyme A carboxylase carboxyl transferase subunit beta</fullName>
        <shortName evidence="1">ACCase subunit beta</shortName>
        <shortName evidence="1">Acetyl-CoA carboxylase carboxyltransferase subunit beta</shortName>
        <ecNumber evidence="1">2.1.3.15</ecNumber>
    </recommendedName>
</protein>
<gene>
    <name evidence="1" type="primary">accD</name>
    <name type="ordered locus">ACIAD0643</name>
</gene>
<evidence type="ECO:0000255" key="1">
    <source>
        <dbReference type="HAMAP-Rule" id="MF_01395"/>
    </source>
</evidence>
<evidence type="ECO:0000255" key="2">
    <source>
        <dbReference type="PROSITE-ProRule" id="PRU01136"/>
    </source>
</evidence>
<proteinExistence type="inferred from homology"/>
<name>ACCD_ACIAD</name>
<reference key="1">
    <citation type="journal article" date="2004" name="Nucleic Acids Res.">
        <title>Unique features revealed by the genome sequence of Acinetobacter sp. ADP1, a versatile and naturally transformation competent bacterium.</title>
        <authorList>
            <person name="Barbe V."/>
            <person name="Vallenet D."/>
            <person name="Fonknechten N."/>
            <person name="Kreimeyer A."/>
            <person name="Oztas S."/>
            <person name="Labarre L."/>
            <person name="Cruveiller S."/>
            <person name="Robert C."/>
            <person name="Duprat S."/>
            <person name="Wincker P."/>
            <person name="Ornston L.N."/>
            <person name="Weissenbach J."/>
            <person name="Marliere P."/>
            <person name="Cohen G.N."/>
            <person name="Medigue C."/>
        </authorList>
    </citation>
    <scope>NUCLEOTIDE SEQUENCE [LARGE SCALE GENOMIC DNA]</scope>
    <source>
        <strain>ATCC 33305 / BD413 / ADP1</strain>
    </source>
</reference>
<feature type="chain" id="PRO_0000389660" description="Acetyl-coenzyme A carboxylase carboxyl transferase subunit beta">
    <location>
        <begin position="1"/>
        <end position="298"/>
    </location>
</feature>
<feature type="domain" description="CoA carboxyltransferase N-terminal" evidence="2">
    <location>
        <begin position="41"/>
        <end position="298"/>
    </location>
</feature>
<feature type="zinc finger region" description="C4-type" evidence="1">
    <location>
        <begin position="45"/>
        <end position="67"/>
    </location>
</feature>
<feature type="binding site" evidence="1">
    <location>
        <position position="45"/>
    </location>
    <ligand>
        <name>Zn(2+)</name>
        <dbReference type="ChEBI" id="CHEBI:29105"/>
    </ligand>
</feature>
<feature type="binding site" evidence="1">
    <location>
        <position position="48"/>
    </location>
    <ligand>
        <name>Zn(2+)</name>
        <dbReference type="ChEBI" id="CHEBI:29105"/>
    </ligand>
</feature>
<feature type="binding site" evidence="1">
    <location>
        <position position="64"/>
    </location>
    <ligand>
        <name>Zn(2+)</name>
        <dbReference type="ChEBI" id="CHEBI:29105"/>
    </ligand>
</feature>
<feature type="binding site" evidence="1">
    <location>
        <position position="67"/>
    </location>
    <ligand>
        <name>Zn(2+)</name>
        <dbReference type="ChEBI" id="CHEBI:29105"/>
    </ligand>
</feature>
<comment type="function">
    <text evidence="1">Component of the acetyl coenzyme A carboxylase (ACC) complex. Biotin carboxylase (BC) catalyzes the carboxylation of biotin on its carrier protein (BCCP) and then the CO(2) group is transferred by the transcarboxylase to acetyl-CoA to form malonyl-CoA.</text>
</comment>
<comment type="catalytic activity">
    <reaction evidence="1">
        <text>N(6)-carboxybiotinyl-L-lysyl-[protein] + acetyl-CoA = N(6)-biotinyl-L-lysyl-[protein] + malonyl-CoA</text>
        <dbReference type="Rhea" id="RHEA:54728"/>
        <dbReference type="Rhea" id="RHEA-COMP:10505"/>
        <dbReference type="Rhea" id="RHEA-COMP:10506"/>
        <dbReference type="ChEBI" id="CHEBI:57288"/>
        <dbReference type="ChEBI" id="CHEBI:57384"/>
        <dbReference type="ChEBI" id="CHEBI:83144"/>
        <dbReference type="ChEBI" id="CHEBI:83145"/>
        <dbReference type="EC" id="2.1.3.15"/>
    </reaction>
</comment>
<comment type="cofactor">
    <cofactor evidence="1">
        <name>Zn(2+)</name>
        <dbReference type="ChEBI" id="CHEBI:29105"/>
    </cofactor>
    <text evidence="1">Binds 1 zinc ion per subunit.</text>
</comment>
<comment type="pathway">
    <text evidence="1">Lipid metabolism; malonyl-CoA biosynthesis; malonyl-CoA from acetyl-CoA: step 1/1.</text>
</comment>
<comment type="subunit">
    <text evidence="1">Acetyl-CoA carboxylase is a heterohexamer composed of biotin carboxyl carrier protein (AccB), biotin carboxylase (AccC) and two subunits each of ACCase subunit alpha (AccA) and ACCase subunit beta (AccD).</text>
</comment>
<comment type="subcellular location">
    <subcellularLocation>
        <location evidence="1">Cytoplasm</location>
    </subcellularLocation>
</comment>
<comment type="similarity">
    <text evidence="1">Belongs to the AccD/PCCB family.</text>
</comment>
<accession>Q6FEE5</accession>
<sequence length="298" mass="32953">MNQEVKSGKILSPSTPWTERQVPGIQVANEQQSLKATSTEPTIECPECHALVTRTAIAFNAYVCPSCDEHLRMKARDRLTWFFDQVDAELGQEFSAKDPLKFVDSKPYPERMREAQSKTGETEALVVMQGTLNNVSMIACAFEFDFMGGSMGTVVGDRFVQAAERAIEQKQALICFAASGGARMQEGMLSLMQMARTSAAIQRMKDAGLPYIVVLTHPVYGGVTASLAMLGDVHIAEPKAMIGFAGKRVIEQTVRETLEEPFQRAEYLLDHGVVDQIVHRHALRDTVSRIVSKLMNLP</sequence>
<organism>
    <name type="scientific">Acinetobacter baylyi (strain ATCC 33305 / BD413 / ADP1)</name>
    <dbReference type="NCBI Taxonomy" id="62977"/>
    <lineage>
        <taxon>Bacteria</taxon>
        <taxon>Pseudomonadati</taxon>
        <taxon>Pseudomonadota</taxon>
        <taxon>Gammaproteobacteria</taxon>
        <taxon>Moraxellales</taxon>
        <taxon>Moraxellaceae</taxon>
        <taxon>Acinetobacter</taxon>
    </lineage>
</organism>